<dbReference type="EC" id="3.1.26.4" evidence="1"/>
<dbReference type="EMBL" id="CP000961">
    <property type="protein sequence ID" value="ACA86885.1"/>
    <property type="molecule type" value="Genomic_DNA"/>
</dbReference>
<dbReference type="RefSeq" id="WP_012325225.1">
    <property type="nucleotide sequence ID" value="NC_010506.1"/>
</dbReference>
<dbReference type="SMR" id="B1KHK0"/>
<dbReference type="STRING" id="392500.Swoo_2608"/>
<dbReference type="KEGG" id="swd:Swoo_2608"/>
<dbReference type="eggNOG" id="COG0328">
    <property type="taxonomic scope" value="Bacteria"/>
</dbReference>
<dbReference type="HOGENOM" id="CLU_030894_6_0_6"/>
<dbReference type="Proteomes" id="UP000002168">
    <property type="component" value="Chromosome"/>
</dbReference>
<dbReference type="GO" id="GO:0005737">
    <property type="term" value="C:cytoplasm"/>
    <property type="evidence" value="ECO:0007669"/>
    <property type="project" value="UniProtKB-SubCell"/>
</dbReference>
<dbReference type="GO" id="GO:0000287">
    <property type="term" value="F:magnesium ion binding"/>
    <property type="evidence" value="ECO:0007669"/>
    <property type="project" value="UniProtKB-UniRule"/>
</dbReference>
<dbReference type="GO" id="GO:0003676">
    <property type="term" value="F:nucleic acid binding"/>
    <property type="evidence" value="ECO:0007669"/>
    <property type="project" value="InterPro"/>
</dbReference>
<dbReference type="GO" id="GO:0004523">
    <property type="term" value="F:RNA-DNA hybrid ribonuclease activity"/>
    <property type="evidence" value="ECO:0007669"/>
    <property type="project" value="UniProtKB-UniRule"/>
</dbReference>
<dbReference type="GO" id="GO:0043137">
    <property type="term" value="P:DNA replication, removal of RNA primer"/>
    <property type="evidence" value="ECO:0007669"/>
    <property type="project" value="TreeGrafter"/>
</dbReference>
<dbReference type="CDD" id="cd09278">
    <property type="entry name" value="RNase_HI_prokaryote_like"/>
    <property type="match status" value="1"/>
</dbReference>
<dbReference type="FunFam" id="3.30.420.10:FF:000008">
    <property type="entry name" value="Ribonuclease H"/>
    <property type="match status" value="1"/>
</dbReference>
<dbReference type="Gene3D" id="3.30.420.10">
    <property type="entry name" value="Ribonuclease H-like superfamily/Ribonuclease H"/>
    <property type="match status" value="1"/>
</dbReference>
<dbReference type="HAMAP" id="MF_00042">
    <property type="entry name" value="RNase_H"/>
    <property type="match status" value="1"/>
</dbReference>
<dbReference type="InterPro" id="IPR050092">
    <property type="entry name" value="RNase_H"/>
</dbReference>
<dbReference type="InterPro" id="IPR012337">
    <property type="entry name" value="RNaseH-like_sf"/>
</dbReference>
<dbReference type="InterPro" id="IPR002156">
    <property type="entry name" value="RNaseH_domain"/>
</dbReference>
<dbReference type="InterPro" id="IPR036397">
    <property type="entry name" value="RNaseH_sf"/>
</dbReference>
<dbReference type="InterPro" id="IPR022892">
    <property type="entry name" value="RNaseHI"/>
</dbReference>
<dbReference type="NCBIfam" id="NF001236">
    <property type="entry name" value="PRK00203.1"/>
    <property type="match status" value="1"/>
</dbReference>
<dbReference type="PANTHER" id="PTHR10642">
    <property type="entry name" value="RIBONUCLEASE H1"/>
    <property type="match status" value="1"/>
</dbReference>
<dbReference type="PANTHER" id="PTHR10642:SF26">
    <property type="entry name" value="RIBONUCLEASE H1"/>
    <property type="match status" value="1"/>
</dbReference>
<dbReference type="Pfam" id="PF00075">
    <property type="entry name" value="RNase_H"/>
    <property type="match status" value="1"/>
</dbReference>
<dbReference type="SUPFAM" id="SSF53098">
    <property type="entry name" value="Ribonuclease H-like"/>
    <property type="match status" value="1"/>
</dbReference>
<dbReference type="PROSITE" id="PS50879">
    <property type="entry name" value="RNASE_H_1"/>
    <property type="match status" value="1"/>
</dbReference>
<reference key="1">
    <citation type="submission" date="2008-02" db="EMBL/GenBank/DDBJ databases">
        <title>Complete sequence of Shewanella woodyi ATCC 51908.</title>
        <authorList>
            <consortium name="US DOE Joint Genome Institute"/>
            <person name="Copeland A."/>
            <person name="Lucas S."/>
            <person name="Lapidus A."/>
            <person name="Glavina del Rio T."/>
            <person name="Dalin E."/>
            <person name="Tice H."/>
            <person name="Bruce D."/>
            <person name="Goodwin L."/>
            <person name="Pitluck S."/>
            <person name="Sims D."/>
            <person name="Brettin T."/>
            <person name="Detter J.C."/>
            <person name="Han C."/>
            <person name="Kuske C.R."/>
            <person name="Schmutz J."/>
            <person name="Larimer F."/>
            <person name="Land M."/>
            <person name="Hauser L."/>
            <person name="Kyrpides N."/>
            <person name="Lykidis A."/>
            <person name="Zhao J.-S."/>
            <person name="Richardson P."/>
        </authorList>
    </citation>
    <scope>NUCLEOTIDE SEQUENCE [LARGE SCALE GENOMIC DNA]</scope>
    <source>
        <strain>ATCC 51908 / MS32</strain>
    </source>
</reference>
<proteinExistence type="inferred from homology"/>
<feature type="chain" id="PRO_1000090919" description="Ribonuclease H">
    <location>
        <begin position="1"/>
        <end position="161"/>
    </location>
</feature>
<feature type="domain" description="RNase H type-1" evidence="2">
    <location>
        <begin position="3"/>
        <end position="144"/>
    </location>
</feature>
<feature type="binding site" evidence="1">
    <location>
        <position position="12"/>
    </location>
    <ligand>
        <name>Mg(2+)</name>
        <dbReference type="ChEBI" id="CHEBI:18420"/>
        <label>1</label>
    </ligand>
</feature>
<feature type="binding site" evidence="1">
    <location>
        <position position="12"/>
    </location>
    <ligand>
        <name>Mg(2+)</name>
        <dbReference type="ChEBI" id="CHEBI:18420"/>
        <label>2</label>
    </ligand>
</feature>
<feature type="binding site" evidence="1">
    <location>
        <position position="50"/>
    </location>
    <ligand>
        <name>Mg(2+)</name>
        <dbReference type="ChEBI" id="CHEBI:18420"/>
        <label>1</label>
    </ligand>
</feature>
<feature type="binding site" evidence="1">
    <location>
        <position position="72"/>
    </location>
    <ligand>
        <name>Mg(2+)</name>
        <dbReference type="ChEBI" id="CHEBI:18420"/>
        <label>1</label>
    </ligand>
</feature>
<feature type="binding site" evidence="1">
    <location>
        <position position="136"/>
    </location>
    <ligand>
        <name>Mg(2+)</name>
        <dbReference type="ChEBI" id="CHEBI:18420"/>
        <label>2</label>
    </ligand>
</feature>
<comment type="function">
    <text evidence="1">Endonuclease that specifically degrades the RNA of RNA-DNA hybrids.</text>
</comment>
<comment type="catalytic activity">
    <reaction evidence="1">
        <text>Endonucleolytic cleavage to 5'-phosphomonoester.</text>
        <dbReference type="EC" id="3.1.26.4"/>
    </reaction>
</comment>
<comment type="cofactor">
    <cofactor evidence="1">
        <name>Mg(2+)</name>
        <dbReference type="ChEBI" id="CHEBI:18420"/>
    </cofactor>
    <text evidence="1">Binds 1 Mg(2+) ion per subunit. May bind a second metal ion at a regulatory site, or after substrate binding.</text>
</comment>
<comment type="subunit">
    <text evidence="1">Monomer.</text>
</comment>
<comment type="subcellular location">
    <subcellularLocation>
        <location evidence="1">Cytoplasm</location>
    </subcellularLocation>
</comment>
<comment type="similarity">
    <text evidence="1">Belongs to the RNase H family.</text>
</comment>
<evidence type="ECO:0000255" key="1">
    <source>
        <dbReference type="HAMAP-Rule" id="MF_00042"/>
    </source>
</evidence>
<evidence type="ECO:0000255" key="2">
    <source>
        <dbReference type="PROSITE-ProRule" id="PRU00408"/>
    </source>
</evidence>
<protein>
    <recommendedName>
        <fullName evidence="1">Ribonuclease H</fullName>
        <shortName evidence="1">RNase H</shortName>
        <ecNumber evidence="1">3.1.26.4</ecNumber>
    </recommendedName>
</protein>
<organism>
    <name type="scientific">Shewanella woodyi (strain ATCC 51908 / MS32)</name>
    <dbReference type="NCBI Taxonomy" id="392500"/>
    <lineage>
        <taxon>Bacteria</taxon>
        <taxon>Pseudomonadati</taxon>
        <taxon>Pseudomonadota</taxon>
        <taxon>Gammaproteobacteria</taxon>
        <taxon>Alteromonadales</taxon>
        <taxon>Shewanellaceae</taxon>
        <taxon>Shewanella</taxon>
    </lineage>
</organism>
<name>RNH_SHEWM</name>
<gene>
    <name evidence="1" type="primary">rnhA</name>
    <name type="ordered locus">Swoo_2608</name>
</gene>
<keyword id="KW-0963">Cytoplasm</keyword>
<keyword id="KW-0255">Endonuclease</keyword>
<keyword id="KW-0378">Hydrolase</keyword>
<keyword id="KW-0460">Magnesium</keyword>
<keyword id="KW-0479">Metal-binding</keyword>
<keyword id="KW-0540">Nuclease</keyword>
<keyword id="KW-1185">Reference proteome</keyword>
<sequence>MSVLKQLSIFTDGSCLGNPGPGGYGVVMKYKAHTKELSDGFALTTNNRMELLAPIIALEALKVPCKIILTSDSQYMRQGITQWIHGWKKKNWITSTKQPVKNVDLWKRLDAATQSHEIDWHWVKGHAGHVENERCDTLARVAAEAKPTQEDLGYQPSVSSS</sequence>
<accession>B1KHK0</accession>